<dbReference type="EMBL" id="CP000745">
    <property type="protein sequence ID" value="ABR65862.1"/>
    <property type="molecule type" value="Genomic_DNA"/>
</dbReference>
<dbReference type="SMR" id="A6VHD6"/>
<dbReference type="STRING" id="426368.MmarC7_0795"/>
<dbReference type="KEGG" id="mmz:MmarC7_0795"/>
<dbReference type="eggNOG" id="arCOG04099">
    <property type="taxonomic scope" value="Archaea"/>
</dbReference>
<dbReference type="HOGENOM" id="CLU_097347_1_1_2"/>
<dbReference type="OrthoDB" id="30559at2157"/>
<dbReference type="GO" id="GO:0022627">
    <property type="term" value="C:cytosolic small ribosomal subunit"/>
    <property type="evidence" value="ECO:0007669"/>
    <property type="project" value="TreeGrafter"/>
</dbReference>
<dbReference type="GO" id="GO:0019843">
    <property type="term" value="F:rRNA binding"/>
    <property type="evidence" value="ECO:0007669"/>
    <property type="project" value="UniProtKB-UniRule"/>
</dbReference>
<dbReference type="GO" id="GO:0003735">
    <property type="term" value="F:structural constituent of ribosome"/>
    <property type="evidence" value="ECO:0007669"/>
    <property type="project" value="InterPro"/>
</dbReference>
<dbReference type="GO" id="GO:0000028">
    <property type="term" value="P:ribosomal small subunit assembly"/>
    <property type="evidence" value="ECO:0007669"/>
    <property type="project" value="TreeGrafter"/>
</dbReference>
<dbReference type="GO" id="GO:0006412">
    <property type="term" value="P:translation"/>
    <property type="evidence" value="ECO:0007669"/>
    <property type="project" value="UniProtKB-UniRule"/>
</dbReference>
<dbReference type="FunFam" id="3.30.860.10:FF:000002">
    <property type="entry name" value="40S ribosomal protein S15"/>
    <property type="match status" value="1"/>
</dbReference>
<dbReference type="Gene3D" id="3.30.860.10">
    <property type="entry name" value="30s Ribosomal Protein S19, Chain A"/>
    <property type="match status" value="1"/>
</dbReference>
<dbReference type="HAMAP" id="MF_00531">
    <property type="entry name" value="Ribosomal_uS19"/>
    <property type="match status" value="1"/>
</dbReference>
<dbReference type="InterPro" id="IPR002222">
    <property type="entry name" value="Ribosomal_uS19"/>
</dbReference>
<dbReference type="InterPro" id="IPR020934">
    <property type="entry name" value="Ribosomal_uS19_CS"/>
</dbReference>
<dbReference type="InterPro" id="IPR005713">
    <property type="entry name" value="Ribosomal_uS19_euk/arc"/>
</dbReference>
<dbReference type="InterPro" id="IPR023575">
    <property type="entry name" value="Ribosomal_uS19_SF"/>
</dbReference>
<dbReference type="NCBIfam" id="NF003121">
    <property type="entry name" value="PRK04038.1"/>
    <property type="match status" value="1"/>
</dbReference>
<dbReference type="NCBIfam" id="TIGR01025">
    <property type="entry name" value="uS19_arch"/>
    <property type="match status" value="1"/>
</dbReference>
<dbReference type="PANTHER" id="PTHR11880">
    <property type="entry name" value="RIBOSOMAL PROTEIN S19P FAMILY MEMBER"/>
    <property type="match status" value="1"/>
</dbReference>
<dbReference type="PANTHER" id="PTHR11880:SF2">
    <property type="entry name" value="SMALL RIBOSOMAL SUBUNIT PROTEIN US19"/>
    <property type="match status" value="1"/>
</dbReference>
<dbReference type="Pfam" id="PF00203">
    <property type="entry name" value="Ribosomal_S19"/>
    <property type="match status" value="1"/>
</dbReference>
<dbReference type="PIRSF" id="PIRSF002144">
    <property type="entry name" value="Ribosomal_S19"/>
    <property type="match status" value="1"/>
</dbReference>
<dbReference type="PRINTS" id="PR00975">
    <property type="entry name" value="RIBOSOMALS19"/>
</dbReference>
<dbReference type="SUPFAM" id="SSF54570">
    <property type="entry name" value="Ribosomal protein S19"/>
    <property type="match status" value="1"/>
</dbReference>
<dbReference type="PROSITE" id="PS00323">
    <property type="entry name" value="RIBOSOMAL_S19"/>
    <property type="match status" value="1"/>
</dbReference>
<feature type="chain" id="PRO_0000354316" description="Small ribosomal subunit protein uS19">
    <location>
        <begin position="1"/>
        <end position="161"/>
    </location>
</feature>
<feature type="region of interest" description="Disordered" evidence="2">
    <location>
        <begin position="1"/>
        <end position="26"/>
    </location>
</feature>
<feature type="compositionally biased region" description="Basic residues" evidence="2">
    <location>
        <begin position="1"/>
        <end position="19"/>
    </location>
</feature>
<keyword id="KW-0687">Ribonucleoprotein</keyword>
<keyword id="KW-0689">Ribosomal protein</keyword>
<keyword id="KW-0694">RNA-binding</keyword>
<keyword id="KW-0699">rRNA-binding</keyword>
<comment type="function">
    <text evidence="1">Protein S19 forms a complex with S13 that binds strongly to the 16S ribosomal RNA.</text>
</comment>
<comment type="similarity">
    <text evidence="1">Belongs to the universal ribosomal protein uS19 family.</text>
</comment>
<proteinExistence type="inferred from homology"/>
<reference key="1">
    <citation type="submission" date="2007-06" db="EMBL/GenBank/DDBJ databases">
        <title>Complete sequence of Methanococcus maripaludis C7.</title>
        <authorList>
            <consortium name="US DOE Joint Genome Institute"/>
            <person name="Copeland A."/>
            <person name="Lucas S."/>
            <person name="Lapidus A."/>
            <person name="Barry K."/>
            <person name="Glavina del Rio T."/>
            <person name="Dalin E."/>
            <person name="Tice H."/>
            <person name="Pitluck S."/>
            <person name="Clum A."/>
            <person name="Schmutz J."/>
            <person name="Larimer F."/>
            <person name="Land M."/>
            <person name="Hauser L."/>
            <person name="Kyrpides N."/>
            <person name="Anderson I."/>
            <person name="Sieprawska-Lupa M."/>
            <person name="Whitman W.B."/>
            <person name="Richardson P."/>
        </authorList>
    </citation>
    <scope>NUCLEOTIDE SEQUENCE [LARGE SCALE GENOMIC DNA]</scope>
    <source>
        <strain>C7 / ATCC BAA-1331</strain>
    </source>
</reference>
<name>RS19_METM7</name>
<sequence>MARQKKYSGKGGARKKNKQKQSVAPRRRVEFKYKGFTLEELQEMPIKKFMEIVPSRQRRTMLRGITPNQRKLVMKIKKARRLTNRGKEPRVIRTHCRDFVITPEMIGLTFGIYNGKEFKEIKLVEETVGRFLGEMAPTRSVVQHGSPGMGATRGSMFVPIK</sequence>
<protein>
    <recommendedName>
        <fullName evidence="1">Small ribosomal subunit protein uS19</fullName>
    </recommendedName>
    <alternativeName>
        <fullName evidence="3">30S ribosomal protein S19</fullName>
    </alternativeName>
</protein>
<evidence type="ECO:0000255" key="1">
    <source>
        <dbReference type="HAMAP-Rule" id="MF_00531"/>
    </source>
</evidence>
<evidence type="ECO:0000256" key="2">
    <source>
        <dbReference type="SAM" id="MobiDB-lite"/>
    </source>
</evidence>
<evidence type="ECO:0000305" key="3"/>
<organism>
    <name type="scientific">Methanococcus maripaludis (strain C7 / ATCC BAA-1331)</name>
    <dbReference type="NCBI Taxonomy" id="426368"/>
    <lineage>
        <taxon>Archaea</taxon>
        <taxon>Methanobacteriati</taxon>
        <taxon>Methanobacteriota</taxon>
        <taxon>Methanomada group</taxon>
        <taxon>Methanococci</taxon>
        <taxon>Methanococcales</taxon>
        <taxon>Methanococcaceae</taxon>
        <taxon>Methanococcus</taxon>
    </lineage>
</organism>
<gene>
    <name evidence="1" type="primary">rps19</name>
    <name type="ordered locus">MmarC7_0795</name>
</gene>
<accession>A6VHD6</accession>